<proteinExistence type="inferred from homology"/>
<feature type="chain" id="PRO_0000356543" description="Large ribosomal subunit protein bL33A">
    <location>
        <begin position="1"/>
        <end position="54"/>
    </location>
</feature>
<protein>
    <recommendedName>
        <fullName evidence="1">Large ribosomal subunit protein bL33A</fullName>
    </recommendedName>
    <alternativeName>
        <fullName evidence="1">50S ribosomal protein L33 1</fullName>
    </alternativeName>
</protein>
<accession>B1MFN2</accession>
<keyword id="KW-1185">Reference proteome</keyword>
<keyword id="KW-0687">Ribonucleoprotein</keyword>
<keyword id="KW-0689">Ribosomal protein</keyword>
<comment type="similarity">
    <text evidence="1">Belongs to the bacterial ribosomal protein bL33 family.</text>
</comment>
<reference key="1">
    <citation type="journal article" date="2009" name="PLoS ONE">
        <title>Non mycobacterial virulence genes in the genome of the emerging pathogen Mycobacterium abscessus.</title>
        <authorList>
            <person name="Ripoll F."/>
            <person name="Pasek S."/>
            <person name="Schenowitz C."/>
            <person name="Dossat C."/>
            <person name="Barbe V."/>
            <person name="Rottman M."/>
            <person name="Macheras E."/>
            <person name="Heym B."/>
            <person name="Herrmann J.L."/>
            <person name="Daffe M."/>
            <person name="Brosch R."/>
            <person name="Risler J.L."/>
            <person name="Gaillard J.L."/>
        </authorList>
    </citation>
    <scope>NUCLEOTIDE SEQUENCE [LARGE SCALE GENOMIC DNA]</scope>
    <source>
        <strain>ATCC 19977 / DSM 44196 / CCUG 20993 / CIP 104536 / JCM 13569 / NCTC 13031 / TMC 1543 / L948</strain>
    </source>
</reference>
<evidence type="ECO:0000255" key="1">
    <source>
        <dbReference type="HAMAP-Rule" id="MF_00294"/>
    </source>
</evidence>
<gene>
    <name evidence="1" type="primary">rpmG1</name>
    <name type="ordered locus">MAB_0333c</name>
</gene>
<organism>
    <name type="scientific">Mycobacteroides abscessus (strain ATCC 19977 / DSM 44196 / CCUG 20993 / CIP 104536 / JCM 13569 / NCTC 13031 / TMC 1543 / L948)</name>
    <name type="common">Mycobacterium abscessus</name>
    <dbReference type="NCBI Taxonomy" id="561007"/>
    <lineage>
        <taxon>Bacteria</taxon>
        <taxon>Bacillati</taxon>
        <taxon>Actinomycetota</taxon>
        <taxon>Actinomycetes</taxon>
        <taxon>Mycobacteriales</taxon>
        <taxon>Mycobacteriaceae</taxon>
        <taxon>Mycobacteroides</taxon>
        <taxon>Mycobacteroides abscessus</taxon>
    </lineage>
</organism>
<name>RL331_MYCA9</name>
<dbReference type="EMBL" id="CU458896">
    <property type="protein sequence ID" value="CAM60432.1"/>
    <property type="molecule type" value="Genomic_DNA"/>
</dbReference>
<dbReference type="SMR" id="B1MFN2"/>
<dbReference type="GeneID" id="93377275"/>
<dbReference type="KEGG" id="mab:MAB_0333c"/>
<dbReference type="Proteomes" id="UP000007137">
    <property type="component" value="Chromosome"/>
</dbReference>
<dbReference type="GO" id="GO:0022625">
    <property type="term" value="C:cytosolic large ribosomal subunit"/>
    <property type="evidence" value="ECO:0007669"/>
    <property type="project" value="TreeGrafter"/>
</dbReference>
<dbReference type="GO" id="GO:0003735">
    <property type="term" value="F:structural constituent of ribosome"/>
    <property type="evidence" value="ECO:0007669"/>
    <property type="project" value="InterPro"/>
</dbReference>
<dbReference type="GO" id="GO:0006412">
    <property type="term" value="P:translation"/>
    <property type="evidence" value="ECO:0007669"/>
    <property type="project" value="UniProtKB-UniRule"/>
</dbReference>
<dbReference type="FunFam" id="2.20.28.120:FF:000002">
    <property type="entry name" value="50S ribosomal protein L33"/>
    <property type="match status" value="1"/>
</dbReference>
<dbReference type="Gene3D" id="2.20.28.120">
    <property type="entry name" value="Ribosomal protein L33"/>
    <property type="match status" value="1"/>
</dbReference>
<dbReference type="HAMAP" id="MF_00294">
    <property type="entry name" value="Ribosomal_bL33"/>
    <property type="match status" value="1"/>
</dbReference>
<dbReference type="InterPro" id="IPR001705">
    <property type="entry name" value="Ribosomal_bL33"/>
</dbReference>
<dbReference type="InterPro" id="IPR018264">
    <property type="entry name" value="Ribosomal_bL33_CS"/>
</dbReference>
<dbReference type="InterPro" id="IPR038584">
    <property type="entry name" value="Ribosomal_bL33_sf"/>
</dbReference>
<dbReference type="InterPro" id="IPR011332">
    <property type="entry name" value="Ribosomal_zn-bd"/>
</dbReference>
<dbReference type="NCBIfam" id="NF001860">
    <property type="entry name" value="PRK00595.1"/>
    <property type="match status" value="1"/>
</dbReference>
<dbReference type="NCBIfam" id="TIGR01023">
    <property type="entry name" value="rpmG_bact"/>
    <property type="match status" value="1"/>
</dbReference>
<dbReference type="PANTHER" id="PTHR15238">
    <property type="entry name" value="54S RIBOSOMAL PROTEIN L39, MITOCHONDRIAL"/>
    <property type="match status" value="1"/>
</dbReference>
<dbReference type="PANTHER" id="PTHR15238:SF1">
    <property type="entry name" value="LARGE RIBOSOMAL SUBUNIT PROTEIN BL33M"/>
    <property type="match status" value="1"/>
</dbReference>
<dbReference type="Pfam" id="PF00471">
    <property type="entry name" value="Ribosomal_L33"/>
    <property type="match status" value="1"/>
</dbReference>
<dbReference type="SUPFAM" id="SSF57829">
    <property type="entry name" value="Zn-binding ribosomal proteins"/>
    <property type="match status" value="1"/>
</dbReference>
<dbReference type="PROSITE" id="PS00582">
    <property type="entry name" value="RIBOSOMAL_L33"/>
    <property type="match status" value="1"/>
</dbReference>
<sequence length="54" mass="6562">MARNEIRPIVKLRSTAGTGYTYVTRKNRRNDPDRMVLRKYDPVVRKHVDFREER</sequence>